<sequence>MATIATYLLAAVAEIGGCFAFWAWLRLDRSPLWLIPGMASLALFAWALTRIDSDLAGRAYAAYGGIYILTSLVWMWLVEGSRPDRWDTLGTVLCVSGALVIIFGPRGGQ</sequence>
<accession>B6IWH9</accession>
<name>Y3291_RHOCS</name>
<dbReference type="EMBL" id="CP000613">
    <property type="protein sequence ID" value="ACJ00653.1"/>
    <property type="molecule type" value="Genomic_DNA"/>
</dbReference>
<dbReference type="RefSeq" id="WP_012568431.1">
    <property type="nucleotide sequence ID" value="NC_011420.2"/>
</dbReference>
<dbReference type="SMR" id="B6IWH9"/>
<dbReference type="KEGG" id="rce:RC1_3291"/>
<dbReference type="eggNOG" id="COG1742">
    <property type="taxonomic scope" value="Bacteria"/>
</dbReference>
<dbReference type="HOGENOM" id="CLU_117653_1_0_5"/>
<dbReference type="OrthoDB" id="123240at2"/>
<dbReference type="Proteomes" id="UP000001591">
    <property type="component" value="Chromosome"/>
</dbReference>
<dbReference type="GO" id="GO:0005886">
    <property type="term" value="C:plasma membrane"/>
    <property type="evidence" value="ECO:0007669"/>
    <property type="project" value="UniProtKB-SubCell"/>
</dbReference>
<dbReference type="HAMAP" id="MF_00010">
    <property type="entry name" value="UPF0060"/>
    <property type="match status" value="1"/>
</dbReference>
<dbReference type="InterPro" id="IPR003844">
    <property type="entry name" value="UPF0060"/>
</dbReference>
<dbReference type="NCBIfam" id="NF002586">
    <property type="entry name" value="PRK02237.1"/>
    <property type="match status" value="1"/>
</dbReference>
<dbReference type="PANTHER" id="PTHR36116">
    <property type="entry name" value="UPF0060 MEMBRANE PROTEIN YNFA"/>
    <property type="match status" value="1"/>
</dbReference>
<dbReference type="PANTHER" id="PTHR36116:SF1">
    <property type="entry name" value="UPF0060 MEMBRANE PROTEIN YNFA"/>
    <property type="match status" value="1"/>
</dbReference>
<dbReference type="Pfam" id="PF02694">
    <property type="entry name" value="UPF0060"/>
    <property type="match status" value="1"/>
</dbReference>
<dbReference type="SUPFAM" id="SSF103481">
    <property type="entry name" value="Multidrug resistance efflux transporter EmrE"/>
    <property type="match status" value="1"/>
</dbReference>
<comment type="subcellular location">
    <subcellularLocation>
        <location evidence="1">Cell inner membrane</location>
        <topology evidence="1">Multi-pass membrane protein</topology>
    </subcellularLocation>
</comment>
<comment type="similarity">
    <text evidence="1">Belongs to the UPF0060 family.</text>
</comment>
<feature type="chain" id="PRO_1000089252" description="UPF0060 membrane protein RC1_3291">
    <location>
        <begin position="1"/>
        <end position="109"/>
    </location>
</feature>
<feature type="transmembrane region" description="Helical" evidence="1">
    <location>
        <begin position="4"/>
        <end position="24"/>
    </location>
</feature>
<feature type="transmembrane region" description="Helical" evidence="1">
    <location>
        <begin position="31"/>
        <end position="51"/>
    </location>
</feature>
<feature type="transmembrane region" description="Helical" evidence="1">
    <location>
        <begin position="59"/>
        <end position="79"/>
    </location>
</feature>
<feature type="transmembrane region" description="Helical" evidence="1">
    <location>
        <begin position="88"/>
        <end position="108"/>
    </location>
</feature>
<reference key="1">
    <citation type="submission" date="2007-03" db="EMBL/GenBank/DDBJ databases">
        <title>Genome sequence of Rhodospirillum centenum.</title>
        <authorList>
            <person name="Touchman J.W."/>
            <person name="Bauer C."/>
            <person name="Blankenship R.E."/>
        </authorList>
    </citation>
    <scope>NUCLEOTIDE SEQUENCE [LARGE SCALE GENOMIC DNA]</scope>
    <source>
        <strain>ATCC 51521 / SW</strain>
    </source>
</reference>
<proteinExistence type="inferred from homology"/>
<keyword id="KW-0997">Cell inner membrane</keyword>
<keyword id="KW-1003">Cell membrane</keyword>
<keyword id="KW-0472">Membrane</keyword>
<keyword id="KW-1185">Reference proteome</keyword>
<keyword id="KW-0812">Transmembrane</keyword>
<keyword id="KW-1133">Transmembrane helix</keyword>
<organism>
    <name type="scientific">Rhodospirillum centenum (strain ATCC 51521 / SW)</name>
    <dbReference type="NCBI Taxonomy" id="414684"/>
    <lineage>
        <taxon>Bacteria</taxon>
        <taxon>Pseudomonadati</taxon>
        <taxon>Pseudomonadota</taxon>
        <taxon>Alphaproteobacteria</taxon>
        <taxon>Rhodospirillales</taxon>
        <taxon>Rhodospirillaceae</taxon>
        <taxon>Rhodospirillum</taxon>
    </lineage>
</organism>
<protein>
    <recommendedName>
        <fullName evidence="1">UPF0060 membrane protein RC1_3291</fullName>
    </recommendedName>
</protein>
<gene>
    <name type="ordered locus">RC1_3291</name>
</gene>
<evidence type="ECO:0000255" key="1">
    <source>
        <dbReference type="HAMAP-Rule" id="MF_00010"/>
    </source>
</evidence>